<organism>
    <name type="scientific">Cyanophora paradoxa</name>
    <dbReference type="NCBI Taxonomy" id="2762"/>
    <lineage>
        <taxon>Eukaryota</taxon>
        <taxon>Glaucocystophyceae</taxon>
        <taxon>Cyanophoraceae</taxon>
        <taxon>Cyanophora</taxon>
    </lineage>
</organism>
<name>RK20_CYAPA</name>
<proteinExistence type="inferred from homology"/>
<accession>P14809</accession>
<gene>
    <name type="primary">rpl20</name>
</gene>
<feature type="initiator methionine" description="Removed" evidence="1">
    <location>
        <position position="1"/>
    </location>
</feature>
<feature type="chain" id="PRO_0000177273" description="Large ribosomal subunit protein bL20c">
    <location>
        <begin position="2"/>
        <end position="114"/>
    </location>
</feature>
<geneLocation type="cyanelle"/>
<evidence type="ECO:0000250" key="1"/>
<evidence type="ECO:0000305" key="2"/>
<sequence>MTRVKRGNVARKRRKKILKLASGFRGAHSRLFRVANQQVMKALRYAYNDRNKRKRDFRALWIARINASARLEGMTYSKLMGSLKKLNIILNRKSLSQLAIYDKDAFMEILKTIP</sequence>
<dbReference type="EMBL" id="X17063">
    <property type="protein sequence ID" value="CAA34908.1"/>
    <property type="molecule type" value="Genomic_DNA"/>
</dbReference>
<dbReference type="EMBL" id="U30821">
    <property type="protein sequence ID" value="AAA81193.1"/>
    <property type="molecule type" value="Genomic_DNA"/>
</dbReference>
<dbReference type="PIR" id="S07071">
    <property type="entry name" value="R5KT20"/>
</dbReference>
<dbReference type="RefSeq" id="NP_043162.1">
    <property type="nucleotide sequence ID" value="NC_001675.1"/>
</dbReference>
<dbReference type="SMR" id="P14809"/>
<dbReference type="GeneID" id="801529"/>
<dbReference type="GO" id="GO:0009842">
    <property type="term" value="C:cyanelle"/>
    <property type="evidence" value="ECO:0007669"/>
    <property type="project" value="UniProtKB-SubCell"/>
</dbReference>
<dbReference type="GO" id="GO:1990904">
    <property type="term" value="C:ribonucleoprotein complex"/>
    <property type="evidence" value="ECO:0007669"/>
    <property type="project" value="UniProtKB-KW"/>
</dbReference>
<dbReference type="GO" id="GO:0005840">
    <property type="term" value="C:ribosome"/>
    <property type="evidence" value="ECO:0007669"/>
    <property type="project" value="UniProtKB-KW"/>
</dbReference>
<dbReference type="GO" id="GO:0019843">
    <property type="term" value="F:rRNA binding"/>
    <property type="evidence" value="ECO:0007669"/>
    <property type="project" value="UniProtKB-KW"/>
</dbReference>
<dbReference type="GO" id="GO:0003735">
    <property type="term" value="F:structural constituent of ribosome"/>
    <property type="evidence" value="ECO:0007669"/>
    <property type="project" value="InterPro"/>
</dbReference>
<dbReference type="GO" id="GO:0006412">
    <property type="term" value="P:translation"/>
    <property type="evidence" value="ECO:0007669"/>
    <property type="project" value="InterPro"/>
</dbReference>
<dbReference type="CDD" id="cd07026">
    <property type="entry name" value="Ribosomal_L20"/>
    <property type="match status" value="1"/>
</dbReference>
<dbReference type="FunFam" id="1.10.1900.20:FF:000001">
    <property type="entry name" value="50S ribosomal protein L20"/>
    <property type="match status" value="1"/>
</dbReference>
<dbReference type="Gene3D" id="6.10.160.10">
    <property type="match status" value="1"/>
</dbReference>
<dbReference type="Gene3D" id="1.10.1900.20">
    <property type="entry name" value="Ribosomal protein L20"/>
    <property type="match status" value="1"/>
</dbReference>
<dbReference type="HAMAP" id="MF_00382">
    <property type="entry name" value="Ribosomal_bL20"/>
    <property type="match status" value="1"/>
</dbReference>
<dbReference type="InterPro" id="IPR005813">
    <property type="entry name" value="Ribosomal_bL20"/>
</dbReference>
<dbReference type="InterPro" id="IPR049946">
    <property type="entry name" value="RIBOSOMAL_L20_CS"/>
</dbReference>
<dbReference type="InterPro" id="IPR035566">
    <property type="entry name" value="Ribosomal_protein_bL20_C"/>
</dbReference>
<dbReference type="NCBIfam" id="TIGR01032">
    <property type="entry name" value="rplT_bact"/>
    <property type="match status" value="1"/>
</dbReference>
<dbReference type="PANTHER" id="PTHR10986">
    <property type="entry name" value="39S RIBOSOMAL PROTEIN L20"/>
    <property type="match status" value="1"/>
</dbReference>
<dbReference type="Pfam" id="PF00453">
    <property type="entry name" value="Ribosomal_L20"/>
    <property type="match status" value="1"/>
</dbReference>
<dbReference type="PRINTS" id="PR00062">
    <property type="entry name" value="RIBOSOMALL20"/>
</dbReference>
<dbReference type="SUPFAM" id="SSF74731">
    <property type="entry name" value="Ribosomal protein L20"/>
    <property type="match status" value="1"/>
</dbReference>
<dbReference type="PROSITE" id="PS00937">
    <property type="entry name" value="RIBOSOMAL_L20"/>
    <property type="match status" value="1"/>
</dbReference>
<protein>
    <recommendedName>
        <fullName evidence="2">Large ribosomal subunit protein bL20c</fullName>
    </recommendedName>
    <alternativeName>
        <fullName>50S ribosomal protein L20, cyanelle</fullName>
    </alternativeName>
</protein>
<keyword id="KW-0194">Cyanelle</keyword>
<keyword id="KW-0934">Plastid</keyword>
<keyword id="KW-0687">Ribonucleoprotein</keyword>
<keyword id="KW-0689">Ribosomal protein</keyword>
<keyword id="KW-0694">RNA-binding</keyword>
<keyword id="KW-0699">rRNA-binding</keyword>
<reference key="1">
    <citation type="journal article" date="1990" name="FEBS Lett.">
        <title>The cyanelle genome of Cyanophora paradoxa encodes ribosomal proteins not encoded by the chloroplasts genomes of higher plants.</title>
        <authorList>
            <person name="Bryant D.A."/>
            <person name="Stirewalt V.L."/>
        </authorList>
    </citation>
    <scope>NUCLEOTIDE SEQUENCE [GENOMIC DNA]</scope>
    <source>
        <strain>UTEX LB 555 / Pringsheim</strain>
    </source>
</reference>
<reference key="2">
    <citation type="journal article" date="1995" name="Plant Mol. Biol. Rep.">
        <title>Nucleotide sequence of the cyanelle DNA from Cyanophora paradoxa.</title>
        <authorList>
            <person name="Stirewalt V.L."/>
            <person name="Michalowski C.B."/>
            <person name="Loeffelhardt W."/>
            <person name="Bohnert H.J."/>
            <person name="Bryant D.A."/>
        </authorList>
    </citation>
    <scope>NUCLEOTIDE SEQUENCE [LARGE SCALE GENOMIC DNA]</scope>
    <source>
        <strain>UTEX LB 555 / Pringsheim</strain>
    </source>
</reference>
<reference key="3">
    <citation type="book" date="1997" name="Eukaryotism and symbiosis">
        <title>The complete sequence of the cyanelle genome of Cyanophora paradoxa: the genetic complexity of a primitive plastid.</title>
        <editorList>
            <person name="Schenk H.E.A."/>
            <person name="Herrmann R."/>
            <person name="Jeon K.W."/>
            <person name="Mueller N.E."/>
            <person name="Schwemmler W."/>
        </editorList>
        <authorList>
            <person name="Loeffelhardt W."/>
            <person name="Stirewalt V.L."/>
            <person name="Michalowski C.B."/>
            <person name="Annarella M."/>
            <person name="Farley J.Y."/>
            <person name="Schluchter W.M."/>
            <person name="Chung S."/>
            <person name="Newmann-Spallart C."/>
            <person name="Steiner J.M."/>
            <person name="Jakowitsch J."/>
            <person name="Bohnert H.J."/>
            <person name="Bryant D.A."/>
        </authorList>
    </citation>
    <scope>NUCLEOTIDE SEQUENCE [LARGE SCALE GENOMIC DNA]</scope>
    <source>
        <strain>UTEX LB 555 / Pringsheim</strain>
    </source>
</reference>
<comment type="function">
    <text evidence="1">Binds directly to 23S ribosomal RNA and is necessary for the in vitro assembly process of the 50S ribosomal subunit. It is not involved in the protein synthesizing functions of that subunit (By similarity).</text>
</comment>
<comment type="subcellular location">
    <subcellularLocation>
        <location>Plastid</location>
        <location>Cyanelle</location>
    </subcellularLocation>
</comment>
<comment type="similarity">
    <text evidence="2">Belongs to the bacterial ribosomal protein bL20 family.</text>
</comment>